<feature type="chain" id="PRO_0000309822" description="tRNA-splicing endonuclease">
    <location>
        <begin position="1"/>
        <end position="183"/>
    </location>
</feature>
<feature type="active site" evidence="1">
    <location>
        <position position="120"/>
    </location>
</feature>
<feature type="active site" evidence="1">
    <location>
        <position position="128"/>
    </location>
</feature>
<feature type="active site" evidence="1">
    <location>
        <position position="159"/>
    </location>
</feature>
<accession>A1RSY7</accession>
<proteinExistence type="inferred from homology"/>
<sequence length="183" mass="20602">MKGVLKGLAVVVEDVEFARKLYKEGFYGRFLGYDKVRREEVDKISAPLILALYEALYLAERGKLKVVSKNGTEVLPEKLIELGREKIKNFDDIYKIYKYFRDLGYVVKSGLKFGALFSVYERGPGIDHAPMVVVFLEPDRGISATDITRGGRLSHSVKKTFTLATVSKQTGEVVLLGFSWAKL</sequence>
<keyword id="KW-0456">Lyase</keyword>
<keyword id="KW-0819">tRNA processing</keyword>
<comment type="function">
    <text evidence="1">Endonuclease that removes tRNA introns. Cleaves pre-tRNA at the 5'- and 3'-splice sites to release the intron. The products are an intron and two tRNA half-molecules bearing 2',3' cyclic phosphate and 5'-OH termini. Recognizes a pseudosymmetric substrate in which 2 bulged loops of 3 bases are separated by a stem of 4 bp.</text>
</comment>
<comment type="catalytic activity">
    <reaction evidence="1">
        <text>pretRNA = a 3'-half-tRNA molecule with a 5'-OH end + a 5'-half-tRNA molecule with a 2',3'-cyclic phosphate end + an intron with a 2',3'-cyclic phosphate and a 5'-hydroxyl terminus.</text>
        <dbReference type="EC" id="4.6.1.16"/>
    </reaction>
</comment>
<comment type="subunit">
    <text evidence="1">Homotetramer; although the tetramer contains four active sites, only two participate in the cleavage. Therefore, it should be considered as a dimer of dimers.</text>
</comment>
<comment type="similarity">
    <text evidence="1">Belongs to the tRNA-intron endonuclease family. Archaeal short subfamily.</text>
</comment>
<gene>
    <name evidence="1" type="primary">endA</name>
    <name type="ordered locus">Pisl_0893</name>
</gene>
<dbReference type="EC" id="4.6.1.16" evidence="1"/>
<dbReference type="EMBL" id="CP000504">
    <property type="protein sequence ID" value="ABL88069.1"/>
    <property type="molecule type" value="Genomic_DNA"/>
</dbReference>
<dbReference type="RefSeq" id="WP_011762644.1">
    <property type="nucleotide sequence ID" value="NC_008701.1"/>
</dbReference>
<dbReference type="SMR" id="A1RSY7"/>
<dbReference type="STRING" id="384616.Pisl_0893"/>
<dbReference type="GeneID" id="4617308"/>
<dbReference type="KEGG" id="pis:Pisl_0893"/>
<dbReference type="eggNOG" id="arCOG01701">
    <property type="taxonomic scope" value="Archaea"/>
</dbReference>
<dbReference type="HOGENOM" id="CLU_114393_0_0_2"/>
<dbReference type="OrthoDB" id="46045at2157"/>
<dbReference type="Proteomes" id="UP000002595">
    <property type="component" value="Chromosome"/>
</dbReference>
<dbReference type="GO" id="GO:0005737">
    <property type="term" value="C:cytoplasm"/>
    <property type="evidence" value="ECO:0007669"/>
    <property type="project" value="TreeGrafter"/>
</dbReference>
<dbReference type="GO" id="GO:0016829">
    <property type="term" value="F:lyase activity"/>
    <property type="evidence" value="ECO:0007669"/>
    <property type="project" value="UniProtKB-KW"/>
</dbReference>
<dbReference type="GO" id="GO:0003676">
    <property type="term" value="F:nucleic acid binding"/>
    <property type="evidence" value="ECO:0007669"/>
    <property type="project" value="InterPro"/>
</dbReference>
<dbReference type="GO" id="GO:0000213">
    <property type="term" value="F:tRNA-intron endonuclease activity"/>
    <property type="evidence" value="ECO:0007669"/>
    <property type="project" value="UniProtKB-UniRule"/>
</dbReference>
<dbReference type="GO" id="GO:0006388">
    <property type="term" value="P:tRNA splicing, via endonucleolytic cleavage and ligation"/>
    <property type="evidence" value="ECO:0007669"/>
    <property type="project" value="UniProtKB-UniRule"/>
</dbReference>
<dbReference type="CDD" id="cd22363">
    <property type="entry name" value="tRNA-intron_lyase_C"/>
    <property type="match status" value="1"/>
</dbReference>
<dbReference type="FunFam" id="3.40.1350.10:FF:000006">
    <property type="entry name" value="tRNA-splicing endonuclease"/>
    <property type="match status" value="1"/>
</dbReference>
<dbReference type="Gene3D" id="3.40.1350.10">
    <property type="match status" value="1"/>
</dbReference>
<dbReference type="Gene3D" id="3.40.1170.20">
    <property type="entry name" value="tRNA intron endonuclease, N-terminal domain"/>
    <property type="match status" value="1"/>
</dbReference>
<dbReference type="HAMAP" id="MF_01833">
    <property type="entry name" value="EndA_short"/>
    <property type="match status" value="1"/>
</dbReference>
<dbReference type="InterPro" id="IPR011856">
    <property type="entry name" value="tRNA_endonuc-like_dom_sf"/>
</dbReference>
<dbReference type="InterPro" id="IPR036167">
    <property type="entry name" value="tRNA_intron_Endo_cat-like_sf"/>
</dbReference>
<dbReference type="InterPro" id="IPR006677">
    <property type="entry name" value="tRNA_intron_Endonuc_cat-like"/>
</dbReference>
<dbReference type="InterPro" id="IPR006678">
    <property type="entry name" value="tRNA_intron_Endonuc_N"/>
</dbReference>
<dbReference type="InterPro" id="IPR036740">
    <property type="entry name" value="tRNA_intron_Endonuc_N_sf"/>
</dbReference>
<dbReference type="InterPro" id="IPR006676">
    <property type="entry name" value="tRNA_splic"/>
</dbReference>
<dbReference type="InterPro" id="IPR016442">
    <property type="entry name" value="tRNA_splic_arch_short"/>
</dbReference>
<dbReference type="NCBIfam" id="TIGR00324">
    <property type="entry name" value="endA"/>
    <property type="match status" value="1"/>
</dbReference>
<dbReference type="PANTHER" id="PTHR21227">
    <property type="entry name" value="TRNA-SPLICING ENDONUCLEASE SUBUNIT SEN2"/>
    <property type="match status" value="1"/>
</dbReference>
<dbReference type="PANTHER" id="PTHR21227:SF0">
    <property type="entry name" value="TRNA-SPLICING ENDONUCLEASE SUBUNIT SEN2"/>
    <property type="match status" value="1"/>
</dbReference>
<dbReference type="Pfam" id="PF01974">
    <property type="entry name" value="tRNA_int_endo"/>
    <property type="match status" value="1"/>
</dbReference>
<dbReference type="Pfam" id="PF02778">
    <property type="entry name" value="tRNA_int_endo_N"/>
    <property type="match status" value="1"/>
</dbReference>
<dbReference type="PIRSF" id="PIRSF005285">
    <property type="entry name" value="tRNA_splic_archaea"/>
    <property type="match status" value="1"/>
</dbReference>
<dbReference type="SUPFAM" id="SSF53032">
    <property type="entry name" value="tRNA-intron endonuclease catalytic domain-like"/>
    <property type="match status" value="1"/>
</dbReference>
<dbReference type="SUPFAM" id="SSF55267">
    <property type="entry name" value="tRNA-intron endonuclease N-terminal domain-like"/>
    <property type="match status" value="1"/>
</dbReference>
<reference key="1">
    <citation type="submission" date="2006-12" db="EMBL/GenBank/DDBJ databases">
        <title>Complete sequence of Pyrobaculum islandicum DSM 4184.</title>
        <authorList>
            <person name="Copeland A."/>
            <person name="Lucas S."/>
            <person name="Lapidus A."/>
            <person name="Barry K."/>
            <person name="Detter J.C."/>
            <person name="Glavina del Rio T."/>
            <person name="Dalin E."/>
            <person name="Tice H."/>
            <person name="Pitluck S."/>
            <person name="Meincke L."/>
            <person name="Brettin T."/>
            <person name="Bruce D."/>
            <person name="Han C."/>
            <person name="Tapia R."/>
            <person name="Gilna P."/>
            <person name="Schmutz J."/>
            <person name="Larimer F."/>
            <person name="Land M."/>
            <person name="Hauser L."/>
            <person name="Kyrpides N."/>
            <person name="Mikhailova N."/>
            <person name="Cozen A.E."/>
            <person name="Fitz-Gibbon S.T."/>
            <person name="House C.H."/>
            <person name="Saltikov C."/>
            <person name="Lowe T."/>
            <person name="Richardson P."/>
        </authorList>
    </citation>
    <scope>NUCLEOTIDE SEQUENCE [LARGE SCALE GENOMIC DNA]</scope>
    <source>
        <strain>DSM 4184 / JCM 9189 / GEO3</strain>
    </source>
</reference>
<evidence type="ECO:0000255" key="1">
    <source>
        <dbReference type="HAMAP-Rule" id="MF_01833"/>
    </source>
</evidence>
<name>ENDA_PYRIL</name>
<protein>
    <recommendedName>
        <fullName evidence="1">tRNA-splicing endonuclease</fullName>
        <ecNumber evidence="1">4.6.1.16</ecNumber>
    </recommendedName>
    <alternativeName>
        <fullName evidence="1">tRNA-intron endonuclease</fullName>
    </alternativeName>
</protein>
<organism>
    <name type="scientific">Pyrobaculum islandicum (strain DSM 4184 / JCM 9189 / GEO3)</name>
    <dbReference type="NCBI Taxonomy" id="384616"/>
    <lineage>
        <taxon>Archaea</taxon>
        <taxon>Thermoproteota</taxon>
        <taxon>Thermoprotei</taxon>
        <taxon>Thermoproteales</taxon>
        <taxon>Thermoproteaceae</taxon>
        <taxon>Pyrobaculum</taxon>
    </lineage>
</organism>